<sequence length="259" mass="29021">MTTETAEKVEYIIETKDVDLFYGSKQALQKIALNIKKNQVTALIGPSGCGKSTFLRTLNRMNDLIPNVKTTGEIHIGGENVQDPKIDMVNLRKKVGMVFQQANPFPFSIYDNVAYGPRMHGIKDKKVLDEIVERSLRQAALWEEVHDRLDRSAIGMSGGQQQRLCIARVLAVKPDVILMDEPTSALDPISTAKVEDLILELKKDYTIVIVTHNMQQASRISDETAFFLNGRIVEFADTTSIFTNPAEKETEDYISGRFG</sequence>
<gene>
    <name evidence="1" type="primary">pstB1</name>
    <name type="ordered locus">lmo2495</name>
</gene>
<comment type="function">
    <text evidence="1">Part of the ABC transporter complex PstSACB involved in phosphate import. Responsible for energy coupling to the transport system.</text>
</comment>
<comment type="catalytic activity">
    <reaction evidence="1">
        <text>phosphate(out) + ATP + H2O = ADP + 2 phosphate(in) + H(+)</text>
        <dbReference type="Rhea" id="RHEA:24440"/>
        <dbReference type="ChEBI" id="CHEBI:15377"/>
        <dbReference type="ChEBI" id="CHEBI:15378"/>
        <dbReference type="ChEBI" id="CHEBI:30616"/>
        <dbReference type="ChEBI" id="CHEBI:43474"/>
        <dbReference type="ChEBI" id="CHEBI:456216"/>
        <dbReference type="EC" id="7.3.2.1"/>
    </reaction>
</comment>
<comment type="subunit">
    <text evidence="1">The complex is composed of two ATP-binding proteins (PstB), two transmembrane proteins (PstC and PstA) and a solute-binding protein (PstS).</text>
</comment>
<comment type="subcellular location">
    <subcellularLocation>
        <location evidence="1">Cell membrane</location>
        <topology evidence="1">Peripheral membrane protein</topology>
    </subcellularLocation>
</comment>
<comment type="similarity">
    <text evidence="1">Belongs to the ABC transporter superfamily. Phosphate importer (TC 3.A.1.7) family.</text>
</comment>
<name>PSTB1_LISMO</name>
<evidence type="ECO:0000255" key="1">
    <source>
        <dbReference type="HAMAP-Rule" id="MF_01702"/>
    </source>
</evidence>
<keyword id="KW-0067">ATP-binding</keyword>
<keyword id="KW-1003">Cell membrane</keyword>
<keyword id="KW-0472">Membrane</keyword>
<keyword id="KW-0547">Nucleotide-binding</keyword>
<keyword id="KW-0592">Phosphate transport</keyword>
<keyword id="KW-1185">Reference proteome</keyword>
<keyword id="KW-1278">Translocase</keyword>
<keyword id="KW-0813">Transport</keyword>
<accession>P63363</accession>
<accession>Q927Z8</accession>
<proteinExistence type="inferred from homology"/>
<protein>
    <recommendedName>
        <fullName evidence="1">Phosphate import ATP-binding protein PstB 1</fullName>
        <ecNumber evidence="1">7.3.2.1</ecNumber>
    </recommendedName>
    <alternativeName>
        <fullName evidence="1">ABC phosphate transporter 1</fullName>
    </alternativeName>
    <alternativeName>
        <fullName evidence="1">Phosphate-transporting ATPase 1</fullName>
    </alternativeName>
</protein>
<feature type="chain" id="PRO_0000092833" description="Phosphate import ATP-binding protein PstB 1">
    <location>
        <begin position="1"/>
        <end position="259"/>
    </location>
</feature>
<feature type="domain" description="ABC transporter" evidence="1">
    <location>
        <begin position="13"/>
        <end position="254"/>
    </location>
</feature>
<feature type="binding site" evidence="1">
    <location>
        <begin position="45"/>
        <end position="52"/>
    </location>
    <ligand>
        <name>ATP</name>
        <dbReference type="ChEBI" id="CHEBI:30616"/>
    </ligand>
</feature>
<reference key="1">
    <citation type="journal article" date="2001" name="Science">
        <title>Comparative genomics of Listeria species.</title>
        <authorList>
            <person name="Glaser P."/>
            <person name="Frangeul L."/>
            <person name="Buchrieser C."/>
            <person name="Rusniok C."/>
            <person name="Amend A."/>
            <person name="Baquero F."/>
            <person name="Berche P."/>
            <person name="Bloecker H."/>
            <person name="Brandt P."/>
            <person name="Chakraborty T."/>
            <person name="Charbit A."/>
            <person name="Chetouani F."/>
            <person name="Couve E."/>
            <person name="de Daruvar A."/>
            <person name="Dehoux P."/>
            <person name="Domann E."/>
            <person name="Dominguez-Bernal G."/>
            <person name="Duchaud E."/>
            <person name="Durant L."/>
            <person name="Dussurget O."/>
            <person name="Entian K.-D."/>
            <person name="Fsihi H."/>
            <person name="Garcia-del Portillo F."/>
            <person name="Garrido P."/>
            <person name="Gautier L."/>
            <person name="Goebel W."/>
            <person name="Gomez-Lopez N."/>
            <person name="Hain T."/>
            <person name="Hauf J."/>
            <person name="Jackson D."/>
            <person name="Jones L.-M."/>
            <person name="Kaerst U."/>
            <person name="Kreft J."/>
            <person name="Kuhn M."/>
            <person name="Kunst F."/>
            <person name="Kurapkat G."/>
            <person name="Madueno E."/>
            <person name="Maitournam A."/>
            <person name="Mata Vicente J."/>
            <person name="Ng E."/>
            <person name="Nedjari H."/>
            <person name="Nordsiek G."/>
            <person name="Novella S."/>
            <person name="de Pablos B."/>
            <person name="Perez-Diaz J.-C."/>
            <person name="Purcell R."/>
            <person name="Remmel B."/>
            <person name="Rose M."/>
            <person name="Schlueter T."/>
            <person name="Simoes N."/>
            <person name="Tierrez A."/>
            <person name="Vazquez-Boland J.-A."/>
            <person name="Voss H."/>
            <person name="Wehland J."/>
            <person name="Cossart P."/>
        </authorList>
    </citation>
    <scope>NUCLEOTIDE SEQUENCE [LARGE SCALE GENOMIC DNA]</scope>
    <source>
        <strain>ATCC BAA-679 / EGD-e</strain>
    </source>
</reference>
<organism>
    <name type="scientific">Listeria monocytogenes serovar 1/2a (strain ATCC BAA-679 / EGD-e)</name>
    <dbReference type="NCBI Taxonomy" id="169963"/>
    <lineage>
        <taxon>Bacteria</taxon>
        <taxon>Bacillati</taxon>
        <taxon>Bacillota</taxon>
        <taxon>Bacilli</taxon>
        <taxon>Bacillales</taxon>
        <taxon>Listeriaceae</taxon>
        <taxon>Listeria</taxon>
    </lineage>
</organism>
<dbReference type="EC" id="7.3.2.1" evidence="1"/>
<dbReference type="EMBL" id="AL591983">
    <property type="protein sequence ID" value="CAD00573.1"/>
    <property type="molecule type" value="Genomic_DNA"/>
</dbReference>
<dbReference type="PIR" id="AG1386">
    <property type="entry name" value="AG1386"/>
</dbReference>
<dbReference type="RefSeq" id="NP_466018.1">
    <property type="nucleotide sequence ID" value="NC_003210.1"/>
</dbReference>
<dbReference type="SMR" id="P63363"/>
<dbReference type="STRING" id="169963.gene:17595206"/>
<dbReference type="PaxDb" id="169963-lmo2495"/>
<dbReference type="EnsemblBacteria" id="CAD00573">
    <property type="protein sequence ID" value="CAD00573"/>
    <property type="gene ID" value="CAD00573"/>
</dbReference>
<dbReference type="GeneID" id="987314"/>
<dbReference type="KEGG" id="lmo:lmo2495"/>
<dbReference type="PATRIC" id="fig|169963.11.peg.2555"/>
<dbReference type="eggNOG" id="COG1117">
    <property type="taxonomic scope" value="Bacteria"/>
</dbReference>
<dbReference type="HOGENOM" id="CLU_000604_1_22_9"/>
<dbReference type="OrthoDB" id="9802185at2"/>
<dbReference type="PhylomeDB" id="P63363"/>
<dbReference type="BioCyc" id="LMON169963:LMO2495-MONOMER"/>
<dbReference type="Proteomes" id="UP000000817">
    <property type="component" value="Chromosome"/>
</dbReference>
<dbReference type="GO" id="GO:0005886">
    <property type="term" value="C:plasma membrane"/>
    <property type="evidence" value="ECO:0007669"/>
    <property type="project" value="UniProtKB-SubCell"/>
</dbReference>
<dbReference type="GO" id="GO:0005524">
    <property type="term" value="F:ATP binding"/>
    <property type="evidence" value="ECO:0007669"/>
    <property type="project" value="UniProtKB-KW"/>
</dbReference>
<dbReference type="GO" id="GO:0016887">
    <property type="term" value="F:ATP hydrolysis activity"/>
    <property type="evidence" value="ECO:0007669"/>
    <property type="project" value="InterPro"/>
</dbReference>
<dbReference type="GO" id="GO:0015415">
    <property type="term" value="F:ATPase-coupled phosphate ion transmembrane transporter activity"/>
    <property type="evidence" value="ECO:0007669"/>
    <property type="project" value="UniProtKB-EC"/>
</dbReference>
<dbReference type="GO" id="GO:0035435">
    <property type="term" value="P:phosphate ion transmembrane transport"/>
    <property type="evidence" value="ECO:0007669"/>
    <property type="project" value="InterPro"/>
</dbReference>
<dbReference type="CDD" id="cd03260">
    <property type="entry name" value="ABC_PstB_phosphate_transporter"/>
    <property type="match status" value="1"/>
</dbReference>
<dbReference type="FunFam" id="3.40.50.300:FF:000132">
    <property type="entry name" value="Phosphate import ATP-binding protein PstB"/>
    <property type="match status" value="1"/>
</dbReference>
<dbReference type="Gene3D" id="3.40.50.300">
    <property type="entry name" value="P-loop containing nucleotide triphosphate hydrolases"/>
    <property type="match status" value="1"/>
</dbReference>
<dbReference type="InterPro" id="IPR003593">
    <property type="entry name" value="AAA+_ATPase"/>
</dbReference>
<dbReference type="InterPro" id="IPR003439">
    <property type="entry name" value="ABC_transporter-like_ATP-bd"/>
</dbReference>
<dbReference type="InterPro" id="IPR017871">
    <property type="entry name" value="ABC_transporter-like_CS"/>
</dbReference>
<dbReference type="InterPro" id="IPR027417">
    <property type="entry name" value="P-loop_NTPase"/>
</dbReference>
<dbReference type="InterPro" id="IPR005670">
    <property type="entry name" value="PstB-like"/>
</dbReference>
<dbReference type="NCBIfam" id="TIGR00972">
    <property type="entry name" value="3a0107s01c2"/>
    <property type="match status" value="1"/>
</dbReference>
<dbReference type="PANTHER" id="PTHR43423">
    <property type="entry name" value="ABC TRANSPORTER I FAMILY MEMBER 17"/>
    <property type="match status" value="1"/>
</dbReference>
<dbReference type="PANTHER" id="PTHR43423:SF1">
    <property type="entry name" value="ABC TRANSPORTER I FAMILY MEMBER 17"/>
    <property type="match status" value="1"/>
</dbReference>
<dbReference type="Pfam" id="PF00005">
    <property type="entry name" value="ABC_tran"/>
    <property type="match status" value="1"/>
</dbReference>
<dbReference type="SMART" id="SM00382">
    <property type="entry name" value="AAA"/>
    <property type="match status" value="1"/>
</dbReference>
<dbReference type="SUPFAM" id="SSF52540">
    <property type="entry name" value="P-loop containing nucleoside triphosphate hydrolases"/>
    <property type="match status" value="1"/>
</dbReference>
<dbReference type="PROSITE" id="PS00211">
    <property type="entry name" value="ABC_TRANSPORTER_1"/>
    <property type="match status" value="1"/>
</dbReference>
<dbReference type="PROSITE" id="PS50893">
    <property type="entry name" value="ABC_TRANSPORTER_2"/>
    <property type="match status" value="1"/>
</dbReference>
<dbReference type="PROSITE" id="PS51238">
    <property type="entry name" value="PSTB"/>
    <property type="match status" value="1"/>
</dbReference>